<gene>
    <name type="ordered locus">Acid345_3782</name>
</gene>
<accession>Q1IK18</accession>
<comment type="function">
    <text evidence="1">Displays ATPase and GTPase activities.</text>
</comment>
<comment type="similarity">
    <text evidence="1">Belongs to the RapZ-like family.</text>
</comment>
<proteinExistence type="inferred from homology"/>
<sequence length="307" mass="34720">MPLRKTKKKKVLPKSPRAPKLQPSELVIITGLSGSGKASVLKAFEDLGYYCVDNLPVDLVPQFADLVADSPEINRAALVLDIREGQGLDRLPATLRSVRQIVKSNVVFLEADDEILLRRFSETRRPHPLGISMPVKASIESERRRLAPIRKVADMMIDTSKFNVHELRALIFDRFGHARTQDHKKILVSCVSFGFRKGVPDDADLLFDVRFLPNPHFVPEFRPFTGRHPKVAKYIRSFPQTQEFINRISELLVYLLPHYISEGKSYLTIAFGCTGGQHRSVMIAEDVKKRLATAGYNVKVVHRDSPK</sequence>
<organism>
    <name type="scientific">Koribacter versatilis (strain Ellin345)</name>
    <dbReference type="NCBI Taxonomy" id="204669"/>
    <lineage>
        <taxon>Bacteria</taxon>
        <taxon>Pseudomonadati</taxon>
        <taxon>Acidobacteriota</taxon>
        <taxon>Terriglobia</taxon>
        <taxon>Terriglobales</taxon>
        <taxon>Candidatus Korobacteraceae</taxon>
        <taxon>Candidatus Korobacter</taxon>
    </lineage>
</organism>
<dbReference type="EMBL" id="CP000360">
    <property type="protein sequence ID" value="ABF42782.1"/>
    <property type="molecule type" value="Genomic_DNA"/>
</dbReference>
<dbReference type="RefSeq" id="WP_011524581.1">
    <property type="nucleotide sequence ID" value="NC_008009.1"/>
</dbReference>
<dbReference type="SMR" id="Q1IK18"/>
<dbReference type="STRING" id="204669.Acid345_3782"/>
<dbReference type="EnsemblBacteria" id="ABF42782">
    <property type="protein sequence ID" value="ABF42782"/>
    <property type="gene ID" value="Acid345_3782"/>
</dbReference>
<dbReference type="KEGG" id="aba:Acid345_3782"/>
<dbReference type="eggNOG" id="COG1660">
    <property type="taxonomic scope" value="Bacteria"/>
</dbReference>
<dbReference type="HOGENOM" id="CLU_059558_0_0_0"/>
<dbReference type="OrthoDB" id="9784461at2"/>
<dbReference type="Proteomes" id="UP000002432">
    <property type="component" value="Chromosome"/>
</dbReference>
<dbReference type="GO" id="GO:0005524">
    <property type="term" value="F:ATP binding"/>
    <property type="evidence" value="ECO:0007669"/>
    <property type="project" value="UniProtKB-UniRule"/>
</dbReference>
<dbReference type="GO" id="GO:0005525">
    <property type="term" value="F:GTP binding"/>
    <property type="evidence" value="ECO:0007669"/>
    <property type="project" value="UniProtKB-UniRule"/>
</dbReference>
<dbReference type="HAMAP" id="MF_00636">
    <property type="entry name" value="RapZ_like"/>
    <property type="match status" value="1"/>
</dbReference>
<dbReference type="InterPro" id="IPR027417">
    <property type="entry name" value="P-loop_NTPase"/>
</dbReference>
<dbReference type="InterPro" id="IPR005337">
    <property type="entry name" value="RapZ-like"/>
</dbReference>
<dbReference type="InterPro" id="IPR053930">
    <property type="entry name" value="RapZ-like_N"/>
</dbReference>
<dbReference type="InterPro" id="IPR053931">
    <property type="entry name" value="RapZ_C"/>
</dbReference>
<dbReference type="NCBIfam" id="NF003828">
    <property type="entry name" value="PRK05416.1"/>
    <property type="match status" value="1"/>
</dbReference>
<dbReference type="PANTHER" id="PTHR30448">
    <property type="entry name" value="RNASE ADAPTER PROTEIN RAPZ"/>
    <property type="match status" value="1"/>
</dbReference>
<dbReference type="PANTHER" id="PTHR30448:SF0">
    <property type="entry name" value="RNASE ADAPTER PROTEIN RAPZ"/>
    <property type="match status" value="1"/>
</dbReference>
<dbReference type="Pfam" id="PF22740">
    <property type="entry name" value="PapZ_C"/>
    <property type="match status" value="1"/>
</dbReference>
<dbReference type="Pfam" id="PF03668">
    <property type="entry name" value="RapZ-like_N"/>
    <property type="match status" value="1"/>
</dbReference>
<dbReference type="PIRSF" id="PIRSF005052">
    <property type="entry name" value="P-loopkin"/>
    <property type="match status" value="1"/>
</dbReference>
<dbReference type="SUPFAM" id="SSF52540">
    <property type="entry name" value="P-loop containing nucleoside triphosphate hydrolases"/>
    <property type="match status" value="1"/>
</dbReference>
<reference key="1">
    <citation type="journal article" date="2009" name="Appl. Environ. Microbiol.">
        <title>Three genomes from the phylum Acidobacteria provide insight into the lifestyles of these microorganisms in soils.</title>
        <authorList>
            <person name="Ward N.L."/>
            <person name="Challacombe J.F."/>
            <person name="Janssen P.H."/>
            <person name="Henrissat B."/>
            <person name="Coutinho P.M."/>
            <person name="Wu M."/>
            <person name="Xie G."/>
            <person name="Haft D.H."/>
            <person name="Sait M."/>
            <person name="Badger J."/>
            <person name="Barabote R.D."/>
            <person name="Bradley B."/>
            <person name="Brettin T.S."/>
            <person name="Brinkac L.M."/>
            <person name="Bruce D."/>
            <person name="Creasy T."/>
            <person name="Daugherty S.C."/>
            <person name="Davidsen T.M."/>
            <person name="DeBoy R.T."/>
            <person name="Detter J.C."/>
            <person name="Dodson R.J."/>
            <person name="Durkin A.S."/>
            <person name="Ganapathy A."/>
            <person name="Gwinn-Giglio M."/>
            <person name="Han C.S."/>
            <person name="Khouri H."/>
            <person name="Kiss H."/>
            <person name="Kothari S.P."/>
            <person name="Madupu R."/>
            <person name="Nelson K.E."/>
            <person name="Nelson W.C."/>
            <person name="Paulsen I."/>
            <person name="Penn K."/>
            <person name="Ren Q."/>
            <person name="Rosovitz M.J."/>
            <person name="Selengut J.D."/>
            <person name="Shrivastava S."/>
            <person name="Sullivan S.A."/>
            <person name="Tapia R."/>
            <person name="Thompson L.S."/>
            <person name="Watkins K.L."/>
            <person name="Yang Q."/>
            <person name="Yu C."/>
            <person name="Zafar N."/>
            <person name="Zhou L."/>
            <person name="Kuske C.R."/>
        </authorList>
    </citation>
    <scope>NUCLEOTIDE SEQUENCE [LARGE SCALE GENOMIC DNA]</scope>
    <source>
        <strain>Ellin345</strain>
    </source>
</reference>
<evidence type="ECO:0000255" key="1">
    <source>
        <dbReference type="HAMAP-Rule" id="MF_00636"/>
    </source>
</evidence>
<name>Y3782_KORVE</name>
<keyword id="KW-0067">ATP-binding</keyword>
<keyword id="KW-0342">GTP-binding</keyword>
<keyword id="KW-0547">Nucleotide-binding</keyword>
<keyword id="KW-1185">Reference proteome</keyword>
<feature type="chain" id="PRO_0000258942" description="Nucleotide-binding protein Acid345_3782">
    <location>
        <begin position="1"/>
        <end position="307"/>
    </location>
</feature>
<feature type="binding site" evidence="1">
    <location>
        <begin position="31"/>
        <end position="38"/>
    </location>
    <ligand>
        <name>ATP</name>
        <dbReference type="ChEBI" id="CHEBI:30616"/>
    </ligand>
</feature>
<feature type="binding site" evidence="1">
    <location>
        <begin position="81"/>
        <end position="84"/>
    </location>
    <ligand>
        <name>GTP</name>
        <dbReference type="ChEBI" id="CHEBI:37565"/>
    </ligand>
</feature>
<protein>
    <recommendedName>
        <fullName evidence="1">Nucleotide-binding protein Acid345_3782</fullName>
    </recommendedName>
</protein>